<proteinExistence type="predicted"/>
<keyword id="KW-1185">Reference proteome</keyword>
<keyword id="KW-0677">Repeat</keyword>
<keyword id="KW-0802">TPR repeat</keyword>
<comment type="sequence caution" evidence="1">
    <conflict type="frameshift">
        <sequence resource="EMBL-CDS" id="AAA88637"/>
    </conflict>
</comment>
<protein>
    <recommendedName>
        <fullName>TPR repeat-containing protein SYNPCC7002_A0425</fullName>
    </recommendedName>
</protein>
<name>Y425_PICP2</name>
<reference key="1">
    <citation type="submission" date="2008-02" db="EMBL/GenBank/DDBJ databases">
        <title>Complete sequence of Synechococcus sp. PCC 7002.</title>
        <authorList>
            <person name="Li T."/>
            <person name="Zhao J."/>
            <person name="Zhao C."/>
            <person name="Liu Z."/>
            <person name="Zhao F."/>
            <person name="Marquardt J."/>
            <person name="Nomura C.T."/>
            <person name="Persson S."/>
            <person name="Detter J.C."/>
            <person name="Richardson P.M."/>
            <person name="Lanz C."/>
            <person name="Schuster S.C."/>
            <person name="Wang J."/>
            <person name="Li S."/>
            <person name="Huang X."/>
            <person name="Cai T."/>
            <person name="Yu Z."/>
            <person name="Luo J."/>
            <person name="Zhao J."/>
            <person name="Bryant D.A."/>
        </authorList>
    </citation>
    <scope>NUCLEOTIDE SEQUENCE [LARGE SCALE GENOMIC DNA]</scope>
    <source>
        <strain>ATCC 27264 / PCC 7002 / PR-6</strain>
    </source>
</reference>
<reference key="2">
    <citation type="journal article" date="1990" name="J. Bacteriol.">
        <title>Nucleotide sequence and further characterization of the Synechococcus sp. strain PCC 7002 recA gene: complementation of a cyanobacterial recA mutation by the Escherichia coli recA gene.</title>
        <authorList>
            <person name="Murphy R.C."/>
            <person name="Gasparich G.E."/>
            <person name="Bryant D.A."/>
            <person name="Porter R.D."/>
        </authorList>
    </citation>
    <scope>NUCLEOTIDE SEQUENCE [GENOMIC DNA] OF 1-276</scope>
</reference>
<feature type="chain" id="PRO_0000106448" description="TPR repeat-containing protein SYNPCC7002_A0425">
    <location>
        <begin position="1"/>
        <end position="387"/>
    </location>
</feature>
<feature type="repeat" description="TPR 1">
    <location>
        <begin position="63"/>
        <end position="96"/>
    </location>
</feature>
<feature type="repeat" description="TPR 2">
    <location>
        <begin position="97"/>
        <end position="130"/>
    </location>
</feature>
<feature type="repeat" description="TPR 3">
    <location>
        <begin position="132"/>
        <end position="164"/>
    </location>
</feature>
<feature type="repeat" description="TPR 4">
    <location>
        <begin position="166"/>
        <end position="198"/>
    </location>
</feature>
<feature type="repeat" description="TPR 5">
    <location>
        <begin position="200"/>
        <end position="232"/>
    </location>
</feature>
<feature type="repeat" description="TPR 6">
    <location>
        <begin position="233"/>
        <end position="266"/>
    </location>
</feature>
<feature type="repeat" description="TPR 7">
    <location>
        <begin position="267"/>
        <end position="300"/>
    </location>
</feature>
<feature type="repeat" description="TPR 8">
    <location>
        <begin position="302"/>
        <end position="334"/>
    </location>
</feature>
<feature type="repeat" description="TPR 9">
    <location>
        <begin position="336"/>
        <end position="368"/>
    </location>
</feature>
<sequence length="387" mass="43185">MKIRETGTRQQHNLRRARIGCVILKKNVTFTMGIRFSRWLVGCGVAIAFGVLSPSVTWANPQLNALLEQGNEQLTNRNFAQAVQHYRQALTLEANNARIHGALGYALSQLGNYSEAVTAYRRATELEDDNAEFFNALGFNLAQSGDNRSAINAYQRATQLQPNNLAYSLGLATVQFRAGDYDQALVAYRKVLAKDSNNTMALQNSLTSLLQLGRNQEAAVLFPDLLRQRPNDAELRIKAAVTWFGLNDRDQAIAFLEEARRLSTRDSAMQIRVGKIYETQNLLPQAIAAYEQASFVDPQSREAFALYGSAAMKTEDYINAIIAYRALTELSPTDPAAFYNFAVALQGRRRSREALEALEMARDLYQQRGDRRGVNITESLMAAIEEG</sequence>
<accession>P19737</accession>
<accession>B1XNZ2</accession>
<organism>
    <name type="scientific">Picosynechococcus sp. (strain ATCC 27264 / PCC 7002 / PR-6)</name>
    <name type="common">Agmenellum quadruplicatum</name>
    <dbReference type="NCBI Taxonomy" id="32049"/>
    <lineage>
        <taxon>Bacteria</taxon>
        <taxon>Bacillati</taxon>
        <taxon>Cyanobacteriota</taxon>
        <taxon>Cyanophyceae</taxon>
        <taxon>Oscillatoriophycideae</taxon>
        <taxon>Chroococcales</taxon>
        <taxon>Geminocystaceae</taxon>
        <taxon>Picosynechococcus</taxon>
    </lineage>
</organism>
<dbReference type="EMBL" id="CP000951">
    <property type="protein sequence ID" value="ACA98435.1"/>
    <property type="molecule type" value="Genomic_DNA"/>
</dbReference>
<dbReference type="EMBL" id="M29495">
    <property type="protein sequence ID" value="AAA88637.1"/>
    <property type="status" value="ALT_FRAME"/>
    <property type="molecule type" value="Genomic_DNA"/>
</dbReference>
<dbReference type="SMR" id="P19737"/>
<dbReference type="STRING" id="32049.SYNPCC7002_A0425"/>
<dbReference type="KEGG" id="syp:SYNPCC7002_A0425"/>
<dbReference type="eggNOG" id="COG0457">
    <property type="taxonomic scope" value="Bacteria"/>
</dbReference>
<dbReference type="HOGENOM" id="CLU_003728_1_0_3"/>
<dbReference type="Proteomes" id="UP000001688">
    <property type="component" value="Chromosome"/>
</dbReference>
<dbReference type="Gene3D" id="1.25.40.10">
    <property type="entry name" value="Tetratricopeptide repeat domain"/>
    <property type="match status" value="2"/>
</dbReference>
<dbReference type="InterPro" id="IPR051012">
    <property type="entry name" value="CellSynth/LPSAsmb/PSIAsmb"/>
</dbReference>
<dbReference type="InterPro" id="IPR011990">
    <property type="entry name" value="TPR-like_helical_dom_sf"/>
</dbReference>
<dbReference type="InterPro" id="IPR019734">
    <property type="entry name" value="TPR_rpt"/>
</dbReference>
<dbReference type="PANTHER" id="PTHR45586:SF1">
    <property type="entry name" value="LIPOPOLYSACCHARIDE ASSEMBLY PROTEIN B"/>
    <property type="match status" value="1"/>
</dbReference>
<dbReference type="PANTHER" id="PTHR45586">
    <property type="entry name" value="TPR REPEAT-CONTAINING PROTEIN PA4667"/>
    <property type="match status" value="1"/>
</dbReference>
<dbReference type="Pfam" id="PF13414">
    <property type="entry name" value="TPR_11"/>
    <property type="match status" value="1"/>
</dbReference>
<dbReference type="Pfam" id="PF13432">
    <property type="entry name" value="TPR_16"/>
    <property type="match status" value="1"/>
</dbReference>
<dbReference type="Pfam" id="PF14559">
    <property type="entry name" value="TPR_19"/>
    <property type="match status" value="1"/>
</dbReference>
<dbReference type="Pfam" id="PF13174">
    <property type="entry name" value="TPR_6"/>
    <property type="match status" value="1"/>
</dbReference>
<dbReference type="SMART" id="SM00028">
    <property type="entry name" value="TPR"/>
    <property type="match status" value="8"/>
</dbReference>
<dbReference type="SUPFAM" id="SSF48452">
    <property type="entry name" value="TPR-like"/>
    <property type="match status" value="1"/>
</dbReference>
<dbReference type="PROSITE" id="PS50005">
    <property type="entry name" value="TPR"/>
    <property type="match status" value="9"/>
</dbReference>
<dbReference type="PROSITE" id="PS50293">
    <property type="entry name" value="TPR_REGION"/>
    <property type="match status" value="1"/>
</dbReference>
<evidence type="ECO:0000305" key="1"/>
<gene>
    <name type="ordered locus">SYNPCC7002_A0425</name>
</gene>